<accession>P46425</accession>
<accession>Q505C3</accession>
<proteinExistence type="evidence at protein level"/>
<feature type="chain" id="PRO_0000185904" description="Glutathione S-transferase P 2">
    <location>
        <begin position="1"/>
        <end position="210"/>
    </location>
</feature>
<feature type="domain" description="GST N-terminal">
    <location>
        <begin position="2"/>
        <end position="81"/>
    </location>
</feature>
<feature type="domain" description="GST C-terminal">
    <location>
        <begin position="83"/>
        <end position="204"/>
    </location>
</feature>
<feature type="binding site" evidence="1">
    <location>
        <position position="8"/>
    </location>
    <ligand>
        <name>glutathione</name>
        <dbReference type="ChEBI" id="CHEBI:57925"/>
    </ligand>
</feature>
<feature type="binding site" evidence="1">
    <location>
        <position position="14"/>
    </location>
    <ligand>
        <name>glutathione</name>
        <dbReference type="ChEBI" id="CHEBI:57925"/>
    </ligand>
</feature>
<feature type="binding site" evidence="1">
    <location>
        <position position="39"/>
    </location>
    <ligand>
        <name>glutathione</name>
        <dbReference type="ChEBI" id="CHEBI:57925"/>
    </ligand>
</feature>
<feature type="binding site" evidence="1">
    <location>
        <position position="45"/>
    </location>
    <ligand>
        <name>glutathione</name>
        <dbReference type="ChEBI" id="CHEBI:57925"/>
    </ligand>
</feature>
<feature type="binding site" evidence="1">
    <location>
        <begin position="52"/>
        <end position="53"/>
    </location>
    <ligand>
        <name>glutathione</name>
        <dbReference type="ChEBI" id="CHEBI:57925"/>
    </ligand>
</feature>
<feature type="binding site" evidence="1">
    <location>
        <begin position="65"/>
        <end position="66"/>
    </location>
    <ligand>
        <name>glutathione</name>
        <dbReference type="ChEBI" id="CHEBI:57925"/>
    </ligand>
</feature>
<evidence type="ECO:0000250" key="1">
    <source>
        <dbReference type="UniProtKB" id="P09211"/>
    </source>
</evidence>
<evidence type="ECO:0000305" key="2"/>
<organism>
    <name type="scientific">Mus musculus</name>
    <name type="common">Mouse</name>
    <dbReference type="NCBI Taxonomy" id="10090"/>
    <lineage>
        <taxon>Eukaryota</taxon>
        <taxon>Metazoa</taxon>
        <taxon>Chordata</taxon>
        <taxon>Craniata</taxon>
        <taxon>Vertebrata</taxon>
        <taxon>Euteleostomi</taxon>
        <taxon>Mammalia</taxon>
        <taxon>Eutheria</taxon>
        <taxon>Euarchontoglires</taxon>
        <taxon>Glires</taxon>
        <taxon>Rodentia</taxon>
        <taxon>Myomorpha</taxon>
        <taxon>Muroidea</taxon>
        <taxon>Muridae</taxon>
        <taxon>Murinae</taxon>
        <taxon>Mus</taxon>
        <taxon>Mus</taxon>
    </lineage>
</organism>
<reference key="1">
    <citation type="journal article" date="1994" name="Biochem. J.">
        <title>Isolation and characterization of two mouse PI class glutathione S-transferase genes.</title>
        <authorList>
            <person name="Bammler T.K."/>
            <person name="Smith C.A.D."/>
            <person name="Wolf R.C."/>
        </authorList>
    </citation>
    <scope>NUCLEOTIDE SEQUENCE [GENOMIC DNA]</scope>
</reference>
<reference key="2">
    <citation type="journal article" date="1994" name="J. Biol. Chem.">
        <title>Two murine GSTpi genes are arranged in tandem and are differentially expressed.</title>
        <authorList>
            <person name="Xu X."/>
            <person name="Stambrook P.J."/>
        </authorList>
    </citation>
    <scope>NUCLEOTIDE SEQUENCE [GENOMIC DNA]</scope>
    <source>
        <strain>129/SvJ</strain>
        <tissue>Liver</tissue>
    </source>
</reference>
<reference key="3">
    <citation type="journal article" date="2004" name="Genome Res.">
        <title>The status, quality, and expansion of the NIH full-length cDNA project: the Mammalian Gene Collection (MGC).</title>
        <authorList>
            <consortium name="The MGC Project Team"/>
        </authorList>
    </citation>
    <scope>NUCLEOTIDE SEQUENCE [LARGE SCALE MRNA]</scope>
    <source>
        <strain>C57BL/6J</strain>
        <tissue>Embryo</tissue>
        <tissue>Mammary gland</tissue>
    </source>
</reference>
<reference key="4">
    <citation type="journal article" date="2010" name="Cell">
        <title>A tissue-specific atlas of mouse protein phosphorylation and expression.</title>
        <authorList>
            <person name="Huttlin E.L."/>
            <person name="Jedrychowski M.P."/>
            <person name="Elias J.E."/>
            <person name="Goswami T."/>
            <person name="Rad R."/>
            <person name="Beausoleil S.A."/>
            <person name="Villen J."/>
            <person name="Haas W."/>
            <person name="Sowa M.E."/>
            <person name="Gygi S.P."/>
        </authorList>
    </citation>
    <scope>IDENTIFICATION BY MASS SPECTROMETRY [LARGE SCALE ANALYSIS]</scope>
    <source>
        <tissue>Lung</tissue>
    </source>
</reference>
<comment type="function">
    <text>Conjugation of reduced glutathione to a wide number of exogenous and endogenous hydrophobic electrophiles. Cannot metabolize 1-chloro-2,4-dinitrobenzene.</text>
</comment>
<comment type="catalytic activity">
    <reaction>
        <text>RX + glutathione = an S-substituted glutathione + a halide anion + H(+)</text>
        <dbReference type="Rhea" id="RHEA:16437"/>
        <dbReference type="ChEBI" id="CHEBI:15378"/>
        <dbReference type="ChEBI" id="CHEBI:16042"/>
        <dbReference type="ChEBI" id="CHEBI:17792"/>
        <dbReference type="ChEBI" id="CHEBI:57925"/>
        <dbReference type="ChEBI" id="CHEBI:90779"/>
        <dbReference type="EC" id="2.5.1.18"/>
    </reaction>
</comment>
<comment type="subunit">
    <text>Homodimer.</text>
</comment>
<comment type="tissue specificity">
    <text>Selectively expressed in gall bladder, colon, heart, and skeletal muscle.</text>
</comment>
<comment type="similarity">
    <text evidence="2">Belongs to the GST superfamily. Pi family.</text>
</comment>
<name>GSTP2_MOUSE</name>
<sequence length="210" mass="23537">MPPYTIVYFPSPGRCEAMRMLLADQGQSWKEEVVTIDTWMQGLLKPTCLYGQLPKFEDGDLTLYQSNAILRHLGRSLGLYGKNQREAAQVDMVNDGVEDLRGKYGTMIYRNYENGKNDYVKALPGHLKPFETLLSQNQGGKAFIVGDQISFADYNLLDLLLIHQVLAPGCLDNFPLLSAYVARLSARPKIKAFLSSPEHVNRPINGNGKQ</sequence>
<gene>
    <name type="primary">Gstp2</name>
    <name type="synonym">Gstpia</name>
</gene>
<protein>
    <recommendedName>
        <fullName>Glutathione S-transferase P 2</fullName>
        <shortName>Gst P2</shortName>
        <ecNumber>2.5.1.18</ecNumber>
    </recommendedName>
    <alternativeName>
        <fullName>GST YF-YF</fullName>
    </alternativeName>
    <alternativeName>
        <fullName>GST class-pi</fullName>
    </alternativeName>
    <alternativeName>
        <fullName>GST-piA</fullName>
    </alternativeName>
</protein>
<dbReference type="EC" id="2.5.1.18"/>
<dbReference type="EMBL" id="X76144">
    <property type="status" value="NOT_ANNOTATED_CDS"/>
    <property type="molecule type" value="Genomic_DNA"/>
</dbReference>
<dbReference type="EMBL" id="U15654">
    <property type="protein sequence ID" value="AAA64836.1"/>
    <property type="molecule type" value="Genomic_DNA"/>
</dbReference>
<dbReference type="EMBL" id="BC064781">
    <property type="protein sequence ID" value="AAH64781.1"/>
    <property type="molecule type" value="mRNA"/>
</dbReference>
<dbReference type="EMBL" id="BC094623">
    <property type="protein sequence ID" value="AAH94623.1"/>
    <property type="molecule type" value="mRNA"/>
</dbReference>
<dbReference type="CCDS" id="CCDS29412.1"/>
<dbReference type="PIR" id="A55140">
    <property type="entry name" value="A55140"/>
</dbReference>
<dbReference type="RefSeq" id="NP_861461.1">
    <property type="nucleotide sequence ID" value="NM_181796.2"/>
</dbReference>
<dbReference type="SMR" id="P46425"/>
<dbReference type="BioGRID" id="200100">
    <property type="interactions" value="3"/>
</dbReference>
<dbReference type="FunCoup" id="P46425">
    <property type="interactions" value="773"/>
</dbReference>
<dbReference type="IntAct" id="P46425">
    <property type="interactions" value="1"/>
</dbReference>
<dbReference type="STRING" id="10090.ENSMUSP00000038931"/>
<dbReference type="iPTMnet" id="P46425"/>
<dbReference type="PhosphoSitePlus" id="P46425"/>
<dbReference type="SwissPalm" id="P46425"/>
<dbReference type="jPOST" id="P46425"/>
<dbReference type="PaxDb" id="10090-ENSMUSP00000038931"/>
<dbReference type="PeptideAtlas" id="P46425"/>
<dbReference type="ProteomicsDB" id="271480"/>
<dbReference type="Pumba" id="P46425"/>
<dbReference type="TopDownProteomics" id="P46425"/>
<dbReference type="DNASU" id="14869"/>
<dbReference type="Ensembl" id="ENSMUST00000042700.12">
    <property type="protein sequence ID" value="ENSMUSP00000038931.10"/>
    <property type="gene ID" value="ENSMUSG00000038155.12"/>
</dbReference>
<dbReference type="GeneID" id="14869"/>
<dbReference type="KEGG" id="mmu:14869"/>
<dbReference type="UCSC" id="uc008fyg.1">
    <property type="organism name" value="mouse"/>
</dbReference>
<dbReference type="AGR" id="MGI:95864"/>
<dbReference type="CTD" id="14869"/>
<dbReference type="MGI" id="MGI:95864">
    <property type="gene designation" value="Gstp2"/>
</dbReference>
<dbReference type="VEuPathDB" id="HostDB:ENSMUSG00000038155"/>
<dbReference type="eggNOG" id="KOG1695">
    <property type="taxonomic scope" value="Eukaryota"/>
</dbReference>
<dbReference type="GeneTree" id="ENSGT00940000162460"/>
<dbReference type="HOGENOM" id="CLU_039475_2_1_1"/>
<dbReference type="InParanoid" id="P46425"/>
<dbReference type="OMA" id="ETTHIDM"/>
<dbReference type="OrthoDB" id="4951845at2759"/>
<dbReference type="PhylomeDB" id="P46425"/>
<dbReference type="TreeFam" id="TF105321"/>
<dbReference type="Reactome" id="R-MMU-156590">
    <property type="pathway name" value="Glutathione conjugation"/>
</dbReference>
<dbReference type="Reactome" id="R-MMU-3299685">
    <property type="pathway name" value="Detoxification of Reactive Oxygen Species"/>
</dbReference>
<dbReference type="Reactome" id="R-MMU-6798695">
    <property type="pathway name" value="Neutrophil degranulation"/>
</dbReference>
<dbReference type="Reactome" id="R-MMU-9753281">
    <property type="pathway name" value="Paracetamol ADME"/>
</dbReference>
<dbReference type="BioGRID-ORCS" id="14869">
    <property type="hits" value="0 hits in 78 CRISPR screens"/>
</dbReference>
<dbReference type="ChiTaRS" id="Gstp2">
    <property type="organism name" value="mouse"/>
</dbReference>
<dbReference type="PRO" id="PR:P46425"/>
<dbReference type="Proteomes" id="UP000000589">
    <property type="component" value="Chromosome 19"/>
</dbReference>
<dbReference type="RNAct" id="P46425">
    <property type="molecule type" value="protein"/>
</dbReference>
<dbReference type="Bgee" id="ENSMUSG00000038155">
    <property type="expression patterns" value="Expressed in embryonic cell in blastocyst and 74 other cell types or tissues"/>
</dbReference>
<dbReference type="ExpressionAtlas" id="P46425">
    <property type="expression patterns" value="baseline and differential"/>
</dbReference>
<dbReference type="GO" id="GO:0005829">
    <property type="term" value="C:cytosol"/>
    <property type="evidence" value="ECO:0000314"/>
    <property type="project" value="FlyBase"/>
</dbReference>
<dbReference type="GO" id="GO:0004364">
    <property type="term" value="F:glutathione transferase activity"/>
    <property type="evidence" value="ECO:0000314"/>
    <property type="project" value="MGI"/>
</dbReference>
<dbReference type="GO" id="GO:0006749">
    <property type="term" value="P:glutathione metabolic process"/>
    <property type="evidence" value="ECO:0000314"/>
    <property type="project" value="MGI"/>
</dbReference>
<dbReference type="CDD" id="cd03210">
    <property type="entry name" value="GST_C_Pi"/>
    <property type="match status" value="1"/>
</dbReference>
<dbReference type="CDD" id="cd03076">
    <property type="entry name" value="GST_N_Pi"/>
    <property type="match status" value="1"/>
</dbReference>
<dbReference type="FunFam" id="1.20.1050.10:FF:000047">
    <property type="entry name" value="Glutathione S-transferase P"/>
    <property type="match status" value="1"/>
</dbReference>
<dbReference type="FunFam" id="3.40.30.10:FF:000071">
    <property type="entry name" value="Glutathione S-transferase P"/>
    <property type="match status" value="1"/>
</dbReference>
<dbReference type="FunFam" id="3.40.30.10:FF:000392">
    <property type="entry name" value="Glutathione S-transferase pi 1"/>
    <property type="match status" value="1"/>
</dbReference>
<dbReference type="Gene3D" id="1.20.1050.10">
    <property type="match status" value="1"/>
</dbReference>
<dbReference type="Gene3D" id="3.40.30.10">
    <property type="entry name" value="Glutaredoxin"/>
    <property type="match status" value="1"/>
</dbReference>
<dbReference type="InterPro" id="IPR010987">
    <property type="entry name" value="Glutathione-S-Trfase_C-like"/>
</dbReference>
<dbReference type="InterPro" id="IPR036282">
    <property type="entry name" value="Glutathione-S-Trfase_C_sf"/>
</dbReference>
<dbReference type="InterPro" id="IPR040079">
    <property type="entry name" value="Glutathione_S-Trfase"/>
</dbReference>
<dbReference type="InterPro" id="IPR004045">
    <property type="entry name" value="Glutathione_S-Trfase_N"/>
</dbReference>
<dbReference type="InterPro" id="IPR004046">
    <property type="entry name" value="GST_C"/>
</dbReference>
<dbReference type="InterPro" id="IPR003082">
    <property type="entry name" value="GST_pi"/>
</dbReference>
<dbReference type="InterPro" id="IPR050213">
    <property type="entry name" value="GST_superfamily"/>
</dbReference>
<dbReference type="InterPro" id="IPR036249">
    <property type="entry name" value="Thioredoxin-like_sf"/>
</dbReference>
<dbReference type="PANTHER" id="PTHR11571">
    <property type="entry name" value="GLUTATHIONE S-TRANSFERASE"/>
    <property type="match status" value="1"/>
</dbReference>
<dbReference type="PANTHER" id="PTHR11571:SF255">
    <property type="entry name" value="GLUTATHIONE S-TRANSFERASE P"/>
    <property type="match status" value="1"/>
</dbReference>
<dbReference type="Pfam" id="PF14497">
    <property type="entry name" value="GST_C_3"/>
    <property type="match status" value="1"/>
</dbReference>
<dbReference type="Pfam" id="PF02798">
    <property type="entry name" value="GST_N"/>
    <property type="match status" value="1"/>
</dbReference>
<dbReference type="PRINTS" id="PR01268">
    <property type="entry name" value="GSTRNSFRASEP"/>
</dbReference>
<dbReference type="SFLD" id="SFLDG01205">
    <property type="entry name" value="AMPS.1"/>
    <property type="match status" value="1"/>
</dbReference>
<dbReference type="SFLD" id="SFLDS00019">
    <property type="entry name" value="Glutathione_Transferase_(cytos"/>
    <property type="match status" value="1"/>
</dbReference>
<dbReference type="SUPFAM" id="SSF47616">
    <property type="entry name" value="GST C-terminal domain-like"/>
    <property type="match status" value="1"/>
</dbReference>
<dbReference type="SUPFAM" id="SSF52833">
    <property type="entry name" value="Thioredoxin-like"/>
    <property type="match status" value="1"/>
</dbReference>
<dbReference type="PROSITE" id="PS50405">
    <property type="entry name" value="GST_CTER"/>
    <property type="match status" value="1"/>
</dbReference>
<dbReference type="PROSITE" id="PS50404">
    <property type="entry name" value="GST_NTER"/>
    <property type="match status" value="1"/>
</dbReference>
<keyword id="KW-1185">Reference proteome</keyword>
<keyword id="KW-0808">Transferase</keyword>